<gene>
    <name evidence="5" type="primary">crtL</name>
    <name evidence="6" type="synonym">lcy</name>
    <name type="ordered locus">Synpcc7942_2062</name>
</gene>
<accession>Q55276</accession>
<accession>Q31LH7</accession>
<proteinExistence type="evidence at protein level"/>
<reference key="1">
    <citation type="journal article" date="1994" name="Plant Cell">
        <title>Molecular structure and enzymatic function of lycopene cyclase from the cyanobacterium Synechococcus sp strain PCC7942.</title>
        <authorList>
            <person name="Cunningham F.X. Jr."/>
            <person name="Sun Z."/>
            <person name="Chamovitz D."/>
            <person name="Hirschberg J."/>
            <person name="Gannt E."/>
        </authorList>
    </citation>
    <scope>NUCLEOTIDE SEQUENCE [GENOMIC DNA]</scope>
    <scope>FUNCTION</scope>
    <scope>CATALYTIC ACTIVITY</scope>
    <scope>ACTIVITY REGULATION</scope>
    <scope>PATHWAY</scope>
    <source>
        <strain>ATCC 33912 / PCC 7942 / FACHB-805</strain>
    </source>
</reference>
<reference key="2">
    <citation type="submission" date="2005-08" db="EMBL/GenBank/DDBJ databases">
        <title>Complete sequence of chromosome 1 of Synechococcus elongatus PCC 7942.</title>
        <authorList>
            <consortium name="US DOE Joint Genome Institute"/>
            <person name="Copeland A."/>
            <person name="Lucas S."/>
            <person name="Lapidus A."/>
            <person name="Barry K."/>
            <person name="Detter J.C."/>
            <person name="Glavina T."/>
            <person name="Hammon N."/>
            <person name="Israni S."/>
            <person name="Pitluck S."/>
            <person name="Schmutz J."/>
            <person name="Larimer F."/>
            <person name="Land M."/>
            <person name="Kyrpides N."/>
            <person name="Lykidis A."/>
            <person name="Golden S."/>
            <person name="Richardson P."/>
        </authorList>
    </citation>
    <scope>NUCLEOTIDE SEQUENCE [LARGE SCALE GENOMIC DNA]</scope>
    <source>
        <strain>ATCC 33912 / PCC 7942 / FACHB-805</strain>
    </source>
</reference>
<reference key="3">
    <citation type="journal article" date="1993" name="FEBS Lett.">
        <title>Cloning and functional expression in Escherichia coli of a cyanobacterial gene for lycopene cyclase, the enzyme that catalyzes the biosynthesis of beta-carotene.</title>
        <authorList>
            <person name="Cunningham F.X. Jr."/>
            <person name="Chamovitz D."/>
            <person name="Misawa N."/>
            <person name="Gantt E."/>
            <person name="Hirschberg J."/>
        </authorList>
    </citation>
    <scope>FUNCTION</scope>
    <scope>CATALYTIC ACTIVITY</scope>
    <scope>ACTIVITY REGULATION</scope>
    <scope>PATHWAY</scope>
    <source>
        <strain>ATCC 33912 / PCC 7942 / FACHB-805</strain>
    </source>
</reference>
<name>LCYB_SYNE7</name>
<evidence type="ECO:0000250" key="1">
    <source>
        <dbReference type="UniProtKB" id="P21687"/>
    </source>
</evidence>
<evidence type="ECO:0000255" key="2"/>
<evidence type="ECO:0000269" key="3">
    <source>
    </source>
</evidence>
<evidence type="ECO:0000269" key="4">
    <source>
    </source>
</evidence>
<evidence type="ECO:0000303" key="5">
    <source>
    </source>
</evidence>
<evidence type="ECO:0000303" key="6">
    <source>
    </source>
</evidence>
<evidence type="ECO:0000305" key="7"/>
<comment type="function">
    <text evidence="3 4">Catalyzes the double cyclization reaction which converts lycopene to beta-carotene (PubMed:7919981, PubMed:8344419). It also converts neurosporene to the monocyclic beta-zeacarotene but does not cyclize zeta-carotene (PubMed:7919981).</text>
</comment>
<comment type="catalytic activity">
    <reaction evidence="3 4">
        <text>a carotenoid psi-end group = a carotenoid beta-end derivative</text>
        <dbReference type="Rhea" id="RHEA:55620"/>
        <dbReference type="ChEBI" id="CHEBI:139114"/>
        <dbReference type="ChEBI" id="CHEBI:139120"/>
        <dbReference type="EC" id="5.5.1.19"/>
    </reaction>
    <physiologicalReaction direction="left-to-right" evidence="3 4">
        <dbReference type="Rhea" id="RHEA:55621"/>
    </physiologicalReaction>
</comment>
<comment type="catalytic activity">
    <reaction evidence="3 4">
        <text>all-trans-lycopene = gamma-carotene</text>
        <dbReference type="Rhea" id="RHEA:32219"/>
        <dbReference type="ChEBI" id="CHEBI:15948"/>
        <dbReference type="ChEBI" id="CHEBI:27740"/>
        <dbReference type="EC" id="5.5.1.19"/>
    </reaction>
    <physiologicalReaction direction="left-to-right" evidence="3 4">
        <dbReference type="Rhea" id="RHEA:32220"/>
    </physiologicalReaction>
</comment>
<comment type="catalytic activity">
    <reaction evidence="3 4">
        <text>gamma-carotene = all-trans-beta-carotene</text>
        <dbReference type="Rhea" id="RHEA:32239"/>
        <dbReference type="ChEBI" id="CHEBI:17579"/>
        <dbReference type="ChEBI" id="CHEBI:27740"/>
        <dbReference type="EC" id="5.5.1.19"/>
    </reaction>
    <physiologicalReaction direction="left-to-right" evidence="3 4">
        <dbReference type="Rhea" id="RHEA:32240"/>
    </physiologicalReaction>
</comment>
<comment type="catalytic activity">
    <reaction evidence="3">
        <text>all-trans-neurosporene = beta-zeacarotene</text>
        <dbReference type="Rhea" id="RHEA:67976"/>
        <dbReference type="ChEBI" id="CHEBI:16833"/>
        <dbReference type="ChEBI" id="CHEBI:27533"/>
        <dbReference type="EC" id="5.5.1.19"/>
    </reaction>
    <physiologicalReaction direction="left-to-right" evidence="3">
        <dbReference type="Rhea" id="RHEA:67977"/>
    </physiologicalReaction>
</comment>
<comment type="cofactor">
    <cofactor evidence="1">
        <name>FAD</name>
        <dbReference type="ChEBI" id="CHEBI:57692"/>
    </cofactor>
</comment>
<comment type="activity regulation">
    <text evidence="3 4">Inhibited by the bleaching herbicide 2-(4-methylphenoxy)triethylamine hydrochloride (MPTA).</text>
</comment>
<comment type="pathway">
    <text evidence="3 4">Carotenoid biosynthesis; beta-carotene biosynthesis.</text>
</comment>
<comment type="pathway">
    <text evidence="3">Carotenoid biosynthesis; beta-zeacarotene biosynthesis.</text>
</comment>
<comment type="similarity">
    <text evidence="7">Belongs to the lycopene cyclase family.</text>
</comment>
<protein>
    <recommendedName>
        <fullName evidence="7">Lycopene beta cyclase</fullName>
        <ecNumber evidence="3 4">5.5.1.19</ecNumber>
    </recommendedName>
    <alternativeName>
        <fullName evidence="6">Lycopene cyclase</fullName>
    </alternativeName>
</protein>
<feature type="chain" id="PRO_0000134985" description="Lycopene beta cyclase">
    <location>
        <begin position="1"/>
        <end position="411"/>
    </location>
</feature>
<feature type="binding site" evidence="2">
    <location>
        <begin position="4"/>
        <end position="32"/>
    </location>
    <ligand>
        <name>NAD(+)</name>
        <dbReference type="ChEBI" id="CHEBI:57540"/>
    </ligand>
</feature>
<sequence>MFDALVIGSGPAGLAIAAELAQRGLKVQGLSPVDPFHPWENTYGIWGPELDSLGLEHLFGHRWSNCVSYFGEAPVQHQYNYGLFDRAQLQQHWLRQCEQGGLQWQLGKAAAIAHDSHHSCVTTAAGQELQARLVVDTTGHQAAFIQRPHSDAIAYQAAYGIIGQFSQPPIEPHQFVLMDYRSDHLSPEERQLPPTFLYAMDLGNDVYFVEETSLAACPAIPYDRLKQRLYQRLATRGVTVQVIQHEEYCLFPMNLPLPDLTQSVVGFGGAASMVHPASGYMVGALLRRAPDLANAIAAGLNASSSLTTAELATQAWRGLWPTEKIRKHYIYQFGLEKLMRFSEAQLNHHFQTFFGLPKEQWYGFLTNTLSLPELIQAMLRLFAQAPNDVRWGLMEQQGRELQLFWQAIAAR</sequence>
<dbReference type="EC" id="5.5.1.19" evidence="3 4"/>
<dbReference type="EMBL" id="X74599">
    <property type="protein sequence ID" value="CAA52677.1"/>
    <property type="molecule type" value="Genomic_DNA"/>
</dbReference>
<dbReference type="EMBL" id="CP000100">
    <property type="protein sequence ID" value="ABB58092.1"/>
    <property type="molecule type" value="Genomic_DNA"/>
</dbReference>
<dbReference type="RefSeq" id="WP_011378296.1">
    <property type="nucleotide sequence ID" value="NZ_JACJTX010000001.1"/>
</dbReference>
<dbReference type="SMR" id="Q55276"/>
<dbReference type="STRING" id="1140.Synpcc7942_2062"/>
<dbReference type="PaxDb" id="1140-Synpcc7942_2062"/>
<dbReference type="GeneID" id="72430938"/>
<dbReference type="KEGG" id="syf:Synpcc7942_2062"/>
<dbReference type="eggNOG" id="COG0644">
    <property type="taxonomic scope" value="Bacteria"/>
</dbReference>
<dbReference type="HOGENOM" id="CLU_032956_1_0_3"/>
<dbReference type="OrthoDB" id="537501at2"/>
<dbReference type="BioCyc" id="SYNEL:SYNPCC7942_2062-MONOMER"/>
<dbReference type="BRENDA" id="5.5.1.19">
    <property type="organism ID" value="7781"/>
</dbReference>
<dbReference type="UniPathway" id="UPA00802"/>
<dbReference type="UniPathway" id="UPA00805"/>
<dbReference type="Proteomes" id="UP000889800">
    <property type="component" value="Chromosome"/>
</dbReference>
<dbReference type="GO" id="GO:0045436">
    <property type="term" value="F:lycopene beta cyclase activity"/>
    <property type="evidence" value="ECO:0007669"/>
    <property type="project" value="RHEA"/>
</dbReference>
<dbReference type="GO" id="GO:0016705">
    <property type="term" value="F:oxidoreductase activity, acting on paired donors, with incorporation or reduction of molecular oxygen"/>
    <property type="evidence" value="ECO:0007669"/>
    <property type="project" value="InterPro"/>
</dbReference>
<dbReference type="GO" id="GO:0016117">
    <property type="term" value="P:carotenoid biosynthetic process"/>
    <property type="evidence" value="ECO:0007669"/>
    <property type="project" value="UniProtKB-KW"/>
</dbReference>
<dbReference type="Gene3D" id="3.50.50.60">
    <property type="entry name" value="FAD/NAD(P)-binding domain"/>
    <property type="match status" value="1"/>
</dbReference>
<dbReference type="InterPro" id="IPR036188">
    <property type="entry name" value="FAD/NAD-bd_sf"/>
</dbReference>
<dbReference type="InterPro" id="IPR054896">
    <property type="entry name" value="LycopCyc"/>
</dbReference>
<dbReference type="InterPro" id="IPR010108">
    <property type="entry name" value="Lycopene_cyclase_b/e"/>
</dbReference>
<dbReference type="NCBIfam" id="TIGR01790">
    <property type="entry name" value="carotene-cycl"/>
    <property type="match status" value="1"/>
</dbReference>
<dbReference type="NCBIfam" id="NF045687">
    <property type="entry name" value="LycopCycCtrL"/>
    <property type="match status" value="1"/>
</dbReference>
<dbReference type="PANTHER" id="PTHR39757">
    <property type="match status" value="1"/>
</dbReference>
<dbReference type="PANTHER" id="PTHR39757:SF5">
    <property type="entry name" value="OS02G0190600 PROTEIN"/>
    <property type="match status" value="1"/>
</dbReference>
<dbReference type="Pfam" id="PF05834">
    <property type="entry name" value="Lycopene_cycl"/>
    <property type="match status" value="1"/>
</dbReference>
<dbReference type="PRINTS" id="PR00469">
    <property type="entry name" value="PNDRDTASEII"/>
</dbReference>
<dbReference type="SUPFAM" id="SSF51905">
    <property type="entry name" value="FAD/NAD(P)-binding domain"/>
    <property type="match status" value="1"/>
</dbReference>
<keyword id="KW-0125">Carotenoid biosynthesis</keyword>
<keyword id="KW-0274">FAD</keyword>
<keyword id="KW-0285">Flavoprotein</keyword>
<keyword id="KW-0413">Isomerase</keyword>
<keyword id="KW-0520">NAD</keyword>
<keyword id="KW-0521">NADP</keyword>
<keyword id="KW-1185">Reference proteome</keyword>
<organism>
    <name type="scientific">Synechococcus elongatus (strain ATCC 33912 / PCC 7942 / FACHB-805)</name>
    <name type="common">Anacystis nidulans R2</name>
    <dbReference type="NCBI Taxonomy" id="1140"/>
    <lineage>
        <taxon>Bacteria</taxon>
        <taxon>Bacillati</taxon>
        <taxon>Cyanobacteriota</taxon>
        <taxon>Cyanophyceae</taxon>
        <taxon>Synechococcales</taxon>
        <taxon>Synechococcaceae</taxon>
        <taxon>Synechococcus</taxon>
    </lineage>
</organism>